<dbReference type="EMBL" id="HM211181">
    <property type="protein sequence ID" value="ADJ67510.1"/>
    <property type="molecule type" value="mRNA"/>
</dbReference>
<dbReference type="GO" id="GO:0005576">
    <property type="term" value="C:extracellular region"/>
    <property type="evidence" value="ECO:0007669"/>
    <property type="project" value="UniProtKB-SubCell"/>
</dbReference>
<dbReference type="GO" id="GO:0030550">
    <property type="term" value="F:acetylcholine receptor inhibitor activity"/>
    <property type="evidence" value="ECO:0007669"/>
    <property type="project" value="InterPro"/>
</dbReference>
<dbReference type="GO" id="GO:0099106">
    <property type="term" value="F:ion channel regulator activity"/>
    <property type="evidence" value="ECO:0007669"/>
    <property type="project" value="UniProtKB-KW"/>
</dbReference>
<dbReference type="GO" id="GO:0090729">
    <property type="term" value="F:toxin activity"/>
    <property type="evidence" value="ECO:0007669"/>
    <property type="project" value="UniProtKB-KW"/>
</dbReference>
<dbReference type="InterPro" id="IPR009958">
    <property type="entry name" value="Conotoxin_a-typ"/>
</dbReference>
<dbReference type="Pfam" id="PF07365">
    <property type="entry name" value="Toxin_8"/>
    <property type="match status" value="1"/>
</dbReference>
<accession>D9IWN7</accession>
<feature type="signal peptide" evidence="1">
    <location>
        <begin position="1"/>
        <end position="21"/>
    </location>
</feature>
<feature type="propeptide" id="PRO_0000453213" evidence="6">
    <location>
        <begin position="22"/>
        <end position="40"/>
    </location>
</feature>
<feature type="peptide" id="PRO_5003125753" description="Conotoxin Pl168" evidence="2">
    <location>
        <begin position="41"/>
        <end position="62"/>
    </location>
</feature>
<feature type="disulfide bond" evidence="6">
    <location>
        <begin position="46"/>
        <end position="52"/>
    </location>
</feature>
<feature type="disulfide bond" evidence="6">
    <location>
        <begin position="47"/>
        <end position="61"/>
    </location>
</feature>
<name>CA168_CONPO</name>
<proteinExistence type="evidence at protein level"/>
<reference key="1">
    <citation type="submission" date="2010-05" db="EMBL/GenBank/DDBJ databases">
        <title>A new alpha-conotoxin Vt1.24 precursor.</title>
        <authorList>
            <person name="Sun T."/>
            <person name="Liu Z."/>
            <person name="Dai Q."/>
        </authorList>
    </citation>
    <scope>NUCLEOTIDE SEQUENCE [MRNA]</scope>
</reference>
<reference key="2">
    <citation type="journal article" date="2015" name="Proteomics">
        <title>Transcriptome and proteome of Conus planorbis identify the nicotinic receptors as primary target for the defensive venom.</title>
        <authorList>
            <person name="Jin A.H."/>
            <person name="Vetter I."/>
            <person name="Himaya S.W."/>
            <person name="Alewood P.F."/>
            <person name="Lewis R.J."/>
            <person name="Dutertre S."/>
        </authorList>
    </citation>
    <scope>NUCLEOTIDE SEQUENCE [MRNA] OF 6-62</scope>
    <scope>PROTEIN SEQUENCE OF 41-62</scope>
    <scope>IDENTIFICATION BY MASS SPECTROMETRY</scope>
    <scope>SUBCELLULAR LOCATION</scope>
    <source>
        <tissue>Venom</tissue>
        <tissue>Venom duct</tissue>
    </source>
</reference>
<reference key="3">
    <citation type="journal article" date="2020" name="Biomedicines">
        <title>Characterisation of a novel A-superfamily conotoxin.</title>
        <authorList>
            <person name="Wilson D.T."/>
            <person name="Bansal P.S."/>
            <person name="Carter D.A."/>
            <person name="Vetter I."/>
            <person name="Nicke A."/>
            <person name="Dutertre S."/>
            <person name="Daly N.L."/>
        </authorList>
    </citation>
    <scope>FUNCTION</scope>
    <scope>SYNTHESIS OF 41-62</scope>
    <scope>STRUCTURE BY NMR OF 41-62</scope>
</reference>
<protein>
    <recommendedName>
        <fullName evidence="3">Conotoxin Pl168</fullName>
    </recommendedName>
    <alternativeName>
        <fullName evidence="7">Alpha-conotoxin Vt1.24</fullName>
    </alternativeName>
</protein>
<comment type="function">
    <text evidence="6">Probable neurotoxin with unknown target. Possibly targets ion channels.</text>
</comment>
<comment type="subcellular location">
    <subcellularLocation>
        <location evidence="2">Secreted</location>
    </subcellularLocation>
</comment>
<comment type="tissue specificity">
    <text evidence="5">Expressed by the venom duct.</text>
</comment>
<comment type="domain">
    <text evidence="4">The cysteine framework is I (CC-C-C). Alpha4/8 pattern.</text>
</comment>
<comment type="PTM">
    <text evidence="6">Both Pro-53 and Pro-62 are not in cis/trans isomerization.</text>
</comment>
<comment type="miscellaneous">
    <text evidence="6">Negative results: does not show activity on a range of nAChRs (alpha-3-beta-2/CHRNA3-CHRNB2, alpha-4-beta-2/CHRNA4-CHRNB2, and alpha-7/CHRNA7), calcium and sodium channels.</text>
</comment>
<comment type="similarity">
    <text evidence="4">Belongs to the conotoxin A superfamily.</text>
</comment>
<comment type="caution">
    <text evidence="6">Shows a different disulfide-stabilized fold, despite containing the conserved cysteine framework and disulfide connectivity of classical alpha-conotoxins.</text>
</comment>
<organism>
    <name type="scientific">Conus planorbis</name>
    <name type="common">Planorbis cone</name>
    <dbReference type="NCBI Taxonomy" id="97183"/>
    <lineage>
        <taxon>Eukaryota</taxon>
        <taxon>Metazoa</taxon>
        <taxon>Spiralia</taxon>
        <taxon>Lophotrochozoa</taxon>
        <taxon>Mollusca</taxon>
        <taxon>Gastropoda</taxon>
        <taxon>Caenogastropoda</taxon>
        <taxon>Neogastropoda</taxon>
        <taxon>Conoidea</taxon>
        <taxon>Conidae</taxon>
        <taxon>Conus</taxon>
        <taxon>Strategoconus</taxon>
    </lineage>
</organism>
<keyword id="KW-0903">Direct protein sequencing</keyword>
<keyword id="KW-1015">Disulfide bond</keyword>
<keyword id="KW-0872">Ion channel impairing toxin</keyword>
<keyword id="KW-0528">Neurotoxin</keyword>
<keyword id="KW-0964">Secreted</keyword>
<keyword id="KW-0732">Signal</keyword>
<keyword id="KW-0800">Toxin</keyword>
<sequence length="62" mass="6829">MGMRMMFTVFLLVVLATTVVSFTLDRASDGANAAADLVARGIRGNCCMFHTCPIDYSRFYCP</sequence>
<evidence type="ECO:0000255" key="1"/>
<evidence type="ECO:0000269" key="2">
    <source>
    </source>
</evidence>
<evidence type="ECO:0000303" key="3">
    <source>
    </source>
</evidence>
<evidence type="ECO:0000305" key="4"/>
<evidence type="ECO:0000305" key="5">
    <source>
    </source>
</evidence>
<evidence type="ECO:0000305" key="6">
    <source>
    </source>
</evidence>
<evidence type="ECO:0000312" key="7">
    <source>
        <dbReference type="EMBL" id="ADJ67510.1"/>
    </source>
</evidence>